<gene>
    <name evidence="1" type="primary">mdoH</name>
    <name evidence="1" type="synonym">opgH</name>
    <name type="ordered locus">KPK_3493</name>
</gene>
<evidence type="ECO:0000255" key="1">
    <source>
        <dbReference type="HAMAP-Rule" id="MF_01072"/>
    </source>
</evidence>
<feature type="chain" id="PRO_1000136656" description="Glucans biosynthesis glucosyltransferase H">
    <location>
        <begin position="1"/>
        <end position="842"/>
    </location>
</feature>
<feature type="transmembrane region" description="Helical" evidence="1">
    <location>
        <begin position="140"/>
        <end position="160"/>
    </location>
</feature>
<feature type="transmembrane region" description="Helical" evidence="1">
    <location>
        <begin position="194"/>
        <end position="214"/>
    </location>
</feature>
<feature type="transmembrane region" description="Helical" evidence="1">
    <location>
        <begin position="513"/>
        <end position="533"/>
    </location>
</feature>
<feature type="transmembrane region" description="Helical" evidence="1">
    <location>
        <begin position="568"/>
        <end position="588"/>
    </location>
</feature>
<feature type="transmembrane region" description="Helical" evidence="1">
    <location>
        <begin position="600"/>
        <end position="620"/>
    </location>
</feature>
<feature type="transmembrane region" description="Helical" evidence="1">
    <location>
        <begin position="622"/>
        <end position="642"/>
    </location>
</feature>
<feature type="transmembrane region" description="Helical" evidence="1">
    <location>
        <begin position="656"/>
        <end position="676"/>
    </location>
</feature>
<feature type="transmembrane region" description="Helical" evidence="1">
    <location>
        <begin position="680"/>
        <end position="700"/>
    </location>
</feature>
<reference key="1">
    <citation type="journal article" date="2008" name="PLoS Genet.">
        <title>Complete genome sequence of the N2-fixing broad host range endophyte Klebsiella pneumoniae 342 and virulence predictions verified in mice.</title>
        <authorList>
            <person name="Fouts D.E."/>
            <person name="Tyler H.L."/>
            <person name="DeBoy R.T."/>
            <person name="Daugherty S."/>
            <person name="Ren Q."/>
            <person name="Badger J.H."/>
            <person name="Durkin A.S."/>
            <person name="Huot H."/>
            <person name="Shrivastava S."/>
            <person name="Kothari S."/>
            <person name="Dodson R.J."/>
            <person name="Mohamoud Y."/>
            <person name="Khouri H."/>
            <person name="Roesch L.F.W."/>
            <person name="Krogfelt K.A."/>
            <person name="Struve C."/>
            <person name="Triplett E.W."/>
            <person name="Methe B.A."/>
        </authorList>
    </citation>
    <scope>NUCLEOTIDE SEQUENCE [LARGE SCALE GENOMIC DNA]</scope>
    <source>
        <strain>342</strain>
    </source>
</reference>
<organism>
    <name type="scientific">Klebsiella pneumoniae (strain 342)</name>
    <dbReference type="NCBI Taxonomy" id="507522"/>
    <lineage>
        <taxon>Bacteria</taxon>
        <taxon>Pseudomonadati</taxon>
        <taxon>Pseudomonadota</taxon>
        <taxon>Gammaproteobacteria</taxon>
        <taxon>Enterobacterales</taxon>
        <taxon>Enterobacteriaceae</taxon>
        <taxon>Klebsiella/Raoultella group</taxon>
        <taxon>Klebsiella</taxon>
        <taxon>Klebsiella pneumoniae complex</taxon>
    </lineage>
</organism>
<dbReference type="EC" id="2.4.1.-" evidence="1"/>
<dbReference type="EMBL" id="CP000964">
    <property type="protein sequence ID" value="ACI08650.1"/>
    <property type="molecule type" value="Genomic_DNA"/>
</dbReference>
<dbReference type="CAZy" id="GT2">
    <property type="family name" value="Glycosyltransferase Family 2"/>
</dbReference>
<dbReference type="KEGG" id="kpe:KPK_3493"/>
<dbReference type="HOGENOM" id="CLU_015730_1_0_6"/>
<dbReference type="UniPathway" id="UPA00637"/>
<dbReference type="Proteomes" id="UP000001734">
    <property type="component" value="Chromosome"/>
</dbReference>
<dbReference type="GO" id="GO:0005886">
    <property type="term" value="C:plasma membrane"/>
    <property type="evidence" value="ECO:0007669"/>
    <property type="project" value="UniProtKB-SubCell"/>
</dbReference>
<dbReference type="GO" id="GO:0016758">
    <property type="term" value="F:hexosyltransferase activity"/>
    <property type="evidence" value="ECO:0007669"/>
    <property type="project" value="UniProtKB-UniRule"/>
</dbReference>
<dbReference type="GO" id="GO:0009250">
    <property type="term" value="P:glucan biosynthetic process"/>
    <property type="evidence" value="ECO:0007669"/>
    <property type="project" value="UniProtKB-UniRule"/>
</dbReference>
<dbReference type="CDD" id="cd04191">
    <property type="entry name" value="Glucan_BSP_MdoH"/>
    <property type="match status" value="1"/>
</dbReference>
<dbReference type="FunFam" id="3.90.550.10:FF:000047">
    <property type="entry name" value="Glucans biosynthesis glucosyltransferase H"/>
    <property type="match status" value="1"/>
</dbReference>
<dbReference type="Gene3D" id="3.90.550.10">
    <property type="entry name" value="Spore Coat Polysaccharide Biosynthesis Protein SpsA, Chain A"/>
    <property type="match status" value="1"/>
</dbReference>
<dbReference type="HAMAP" id="MF_01072">
    <property type="entry name" value="MdoH_OpgH"/>
    <property type="match status" value="1"/>
</dbReference>
<dbReference type="InterPro" id="IPR023725">
    <property type="entry name" value="Glucans_biosynth_gluTrFase_H"/>
</dbReference>
<dbReference type="InterPro" id="IPR001173">
    <property type="entry name" value="Glyco_trans_2-like"/>
</dbReference>
<dbReference type="InterPro" id="IPR050321">
    <property type="entry name" value="Glycosyltr_2/OpgH_subfam"/>
</dbReference>
<dbReference type="InterPro" id="IPR029044">
    <property type="entry name" value="Nucleotide-diphossugar_trans"/>
</dbReference>
<dbReference type="NCBIfam" id="NF003955">
    <property type="entry name" value="PRK05454.1-1"/>
    <property type="match status" value="1"/>
</dbReference>
<dbReference type="NCBIfam" id="NF003958">
    <property type="entry name" value="PRK05454.2-1"/>
    <property type="match status" value="1"/>
</dbReference>
<dbReference type="NCBIfam" id="NF003962">
    <property type="entry name" value="PRK05454.2-5"/>
    <property type="match status" value="1"/>
</dbReference>
<dbReference type="PANTHER" id="PTHR43867">
    <property type="entry name" value="CELLULOSE SYNTHASE CATALYTIC SUBUNIT A [UDP-FORMING]"/>
    <property type="match status" value="1"/>
</dbReference>
<dbReference type="PANTHER" id="PTHR43867:SF5">
    <property type="entry name" value="GLUCANS BIOSYNTHESIS GLUCOSYLTRANSFERASE H"/>
    <property type="match status" value="1"/>
</dbReference>
<dbReference type="Pfam" id="PF00535">
    <property type="entry name" value="Glycos_transf_2"/>
    <property type="match status" value="1"/>
</dbReference>
<dbReference type="SUPFAM" id="SSF53448">
    <property type="entry name" value="Nucleotide-diphospho-sugar transferases"/>
    <property type="match status" value="1"/>
</dbReference>
<proteinExistence type="inferred from homology"/>
<sequence length="842" mass="96081">MNKITKYIDALPLSDAEKSALPDTSLQAVHQALDDEHQTFAREDDSPLGSVKARLAHSWPDSLSGDQLVKDDEGRTQLHAMPKARRSSMIPDPWRTNPVGRFWDRLRGRDVTPRYLSRLTQEERESEQKWRTVGTIRRYILLLLTLSQTVVATWYMKTILPYQGWALINPADMVGQNLWISFMQLLPYVLQSGILILFAVLFCWVSAGFWTALMGFLQLLIGRDKYSISASTVGDEPLNPAHRTALIMPICNEDVDRVFAGLRATWESVKATGNAAHFDVYILSDSYNPDICVAEQKAWMELIAEVQGEGQIFYRRRRRRVKRKSGNIDDFCRRWGSQYSYMVVLDADSVMTGECLSSLVRLMEANPNAGIIQSSPRASGMDTLYARCQQFATRVYGPLFTAGLHFWQLGESHYWGHNAIIRVKPFIEHCALAPLPGEGNFAGSILSHDFVEAALMRRAGWGVWIAYDLPGSYEELPPNLLDELKRDRRWCQGNLMNFRLFLVRGMHPVHRAVFLTGVMSYLSAPLWFMFLALSTALQVVHALTEPQYFLQPRQLFPVWPQWRPELAIALFASTMVLLFLPKLLSIILVWCKGPKEYGGFIRVTLSLLLEVLFSVLLAPVRMLFHTVFVVSAFLGWEVVWNSPQRDDDSTPWGEAFMRHGSQLLLGLVWAVGMAWLDLRFLFWLAPIVVSLILSPFVSAISSRATVGLRTKRWKLFLIPEEYSPPQVLKDTDAYLTLNRQRSLDDGFMHAVFNPSFNALATAMATARHRHGHILEIARERHVEQALNETPDKLNRDRRLVLLSDPVTMSRLHYRVWAAPEKYSSWVNAYQQLALNPLALKTK</sequence>
<comment type="function">
    <text evidence="1">Involved in the biosynthesis of osmoregulated periplasmic glucans (OPGs).</text>
</comment>
<comment type="pathway">
    <text evidence="1">Glycan metabolism; osmoregulated periplasmic glucan (OPG) biosynthesis.</text>
</comment>
<comment type="subcellular location">
    <subcellularLocation>
        <location evidence="1">Cell inner membrane</location>
        <topology evidence="1">Multi-pass membrane protein</topology>
    </subcellularLocation>
</comment>
<comment type="similarity">
    <text evidence="1">Belongs to the glycosyltransferase 2 family. OpgH subfamily.</text>
</comment>
<protein>
    <recommendedName>
        <fullName evidence="1">Glucans biosynthesis glucosyltransferase H</fullName>
        <ecNumber evidence="1">2.4.1.-</ecNumber>
    </recommendedName>
</protein>
<name>OPGH_KLEP3</name>
<keyword id="KW-0997">Cell inner membrane</keyword>
<keyword id="KW-1003">Cell membrane</keyword>
<keyword id="KW-0328">Glycosyltransferase</keyword>
<keyword id="KW-0472">Membrane</keyword>
<keyword id="KW-0808">Transferase</keyword>
<keyword id="KW-0812">Transmembrane</keyword>
<keyword id="KW-1133">Transmembrane helix</keyword>
<accession>B5XXK5</accession>